<accession>Q5R9Z1</accession>
<reference key="1">
    <citation type="submission" date="2004-11" db="EMBL/GenBank/DDBJ databases">
        <authorList>
            <consortium name="The German cDNA consortium"/>
        </authorList>
    </citation>
    <scope>NUCLEOTIDE SEQUENCE [LARGE SCALE MRNA]</scope>
    <source>
        <tissue>Brain cortex</tissue>
    </source>
</reference>
<gene>
    <name type="primary">VPS29</name>
</gene>
<protein>
    <recommendedName>
        <fullName>Vacuolar protein sorting-associated protein 29</fullName>
    </recommendedName>
    <alternativeName>
        <fullName>Vesicle protein sorting 29</fullName>
    </alternativeName>
</protein>
<name>VPS29_PONAB</name>
<keyword id="KW-0007">Acetylation</keyword>
<keyword id="KW-0963">Cytoplasm</keyword>
<keyword id="KW-0967">Endosome</keyword>
<keyword id="KW-0472">Membrane</keyword>
<keyword id="KW-0479">Metal-binding</keyword>
<keyword id="KW-0653">Protein transport</keyword>
<keyword id="KW-1185">Reference proteome</keyword>
<keyword id="KW-0813">Transport</keyword>
<keyword id="KW-0862">Zinc</keyword>
<organism>
    <name type="scientific">Pongo abelii</name>
    <name type="common">Sumatran orangutan</name>
    <name type="synonym">Pongo pygmaeus abelii</name>
    <dbReference type="NCBI Taxonomy" id="9601"/>
    <lineage>
        <taxon>Eukaryota</taxon>
        <taxon>Metazoa</taxon>
        <taxon>Chordata</taxon>
        <taxon>Craniata</taxon>
        <taxon>Vertebrata</taxon>
        <taxon>Euteleostomi</taxon>
        <taxon>Mammalia</taxon>
        <taxon>Eutheria</taxon>
        <taxon>Euarchontoglires</taxon>
        <taxon>Primates</taxon>
        <taxon>Haplorrhini</taxon>
        <taxon>Catarrhini</taxon>
        <taxon>Hominidae</taxon>
        <taxon>Pongo</taxon>
    </lineage>
</organism>
<feature type="chain" id="PRO_0000339649" description="Vacuolar protein sorting-associated protein 29">
    <location>
        <begin position="1"/>
        <end position="182"/>
    </location>
</feature>
<feature type="modified residue" description="N6-acetyllysine" evidence="2">
    <location>
        <position position="50"/>
    </location>
</feature>
<comment type="function">
    <text evidence="2">Component of the commander complex that is essential for endosomal recycling of transmembrane cargos; the commander complex is composed of the CCC subcomplex and the retriever subcomplex (By similarity). Component of the retriever complex, which is a heterotrimeric complex related to retromer cargo-selective complex (CSC) and essential for retromer-independent retrieval and recycling of numerous cargos such as integrin alpha-5/beta-1 (ITGA5:ITGB1) (By similarity). Component of the retromer cargo-selective complex (CSC). The CSC is believed to be the core functional component of retromer or respective retromer complex variants acting to prevent missorting of selected transmembrane cargo proteins into the lysosomal degradation pathway. The recruitment of the CSC to the endosomal membrane involves RAB7A and SNX3. The SNX-BAR retromer mediates retrograde transport of cargo proteins from endosomes to the trans-Golgi network (TGN) and is involved in endosome-to-plasma membrane transport for cargo protein recycling. The SNX3-retromer mediates the retrograde endosome-to-TGN transport of WLS distinct from the SNX-BAR retromer pathway. The SNX27-retromer is believed to be involved in endosome-to-plasma membrane trafficking and recycling of a broad spectrum of cargo proteins. The CSC seems to act as recruitment hub for other proteins, such as the WASH complex and TBC1D5. Required to regulate transcytosis of the polymeric immunoglobulin receptor (pIgR-pIgA) (By similarity). In the endosomes, retriever complex drives the retrieval and recycling of NxxY-motif-containing cargo proteins by coupling to SNX17, a cargo essential for the homeostatic maintenance of numerous cell surface proteins associated with processes that include cell migration, cell adhesion, nutrient supply and cell signaling (By similarity). The recruitment of the retriever complex to the endosomal membrane involves CCC and WASH complexes (By similarity). Involved in GLUT1 endosome-to-plasma membrane trafficking; the function is dependent of association with ANKRD27 (By similarity).</text>
</comment>
<comment type="subunit">
    <text evidence="1 2">Component of the commander complex consisting of the CCC subcomplex and the retriever subcomplex (By similarity). Component of the heterotrimeric retriever complex formed by VPS26C, VPS29 and VPS35L; within the complex interacts with VPS35L (By similarity). Component of the heterotrimeric retromer cargo-selective complex (CSC), also described as vacuolar protein sorting subcomplex (VPS), formed by VPS26 (VPS26A or VPS26B), VPS29 and VPS35 (By similarity). The CSC has a highly elongated structure with VPS26 and VPS29 binding independently at opposite distal ends of VPS35 as central platform (By similarity). The CSC is believed to associate with variable sorting nexins to form functionally distinct retromer complex variants. The originally described retromer complex (also called SNX-BAR retromer) is a pentamer containing the CSC and a heterodimeric membrane-deforming subcomplex formed between SNX1 or SNX2 and SNX5 or SNX6 (also called SNX-BAR subcomplex); the respective CSC and SNX-BAR subcomplexes associate with low affinity. The CSC associates with SNX3 to form a SNX3-retromer complex. The CSC associates with SNX27, the WASH complex and the SNX-BAR subcomplex to form the SNX27-retromer complex (By similarity). Interacts with VPS26A, VPS35, SNX1, SNX2, SNX3, SNX27, WASHC5 (By similarity). Interacts with TBC1D5; this interaction is blocked by VPS35L in the retriever complex (By similarity). Interacts with SNX17; the interaction is indirect; SNX17 (via its C-terminus) interacts with the retriever complex (via VPS26C and VPS35L) (By similarity). Interacts with VPS26B and ANKRD27 (By similarity).</text>
</comment>
<comment type="subcellular location">
    <subcellularLocation>
        <location>Cytoplasm</location>
    </subcellularLocation>
    <subcellularLocation>
        <location>Membrane</location>
        <topology>Peripheral membrane protein</topology>
    </subcellularLocation>
    <subcellularLocation>
        <location evidence="1">Endosome membrane</location>
        <topology evidence="1">Peripheral membrane protein</topology>
    </subcellularLocation>
    <subcellularLocation>
        <location evidence="3">Early endosome</location>
    </subcellularLocation>
    <subcellularLocation>
        <location evidence="3">Late endosome</location>
    </subcellularLocation>
</comment>
<comment type="similarity">
    <text evidence="3">Belongs to the VPS29 family.</text>
</comment>
<proteinExistence type="evidence at transcript level"/>
<evidence type="ECO:0000250" key="1">
    <source>
        <dbReference type="UniProtKB" id="Q9QZ88"/>
    </source>
</evidence>
<evidence type="ECO:0000250" key="2">
    <source>
        <dbReference type="UniProtKB" id="Q9UBQ0"/>
    </source>
</evidence>
<evidence type="ECO:0000305" key="3"/>
<sequence>MLVLVLGDLHIPHRCNSLPAKFKKLLVPGKIQHILCTGNLCTKESYDYLKTLAGDVHIVRGDFDENLNYPEQKVVTVGQFKIGLIHGHQVIPWGDMASLALLQRQFDVDILISGHTHKFEAFEHENKFYINPGSATGAYNALEANIIPSFVLMDIQASTVVTYVYQLIGDDVKVERIEYKKS</sequence>
<dbReference type="EMBL" id="CR859239">
    <property type="protein sequence ID" value="CAH91419.1"/>
    <property type="molecule type" value="mRNA"/>
</dbReference>
<dbReference type="RefSeq" id="NP_001129021.1">
    <property type="nucleotide sequence ID" value="NM_001135549.1"/>
</dbReference>
<dbReference type="SMR" id="Q5R9Z1"/>
<dbReference type="STRING" id="9601.ENSPPYP00000005648"/>
<dbReference type="GeneID" id="100190862"/>
<dbReference type="KEGG" id="pon:100190862"/>
<dbReference type="CTD" id="51699"/>
<dbReference type="eggNOG" id="KOG3325">
    <property type="taxonomic scope" value="Eukaryota"/>
</dbReference>
<dbReference type="InParanoid" id="Q5R9Z1"/>
<dbReference type="OrthoDB" id="10258130at2759"/>
<dbReference type="Proteomes" id="UP000001595">
    <property type="component" value="Unplaced"/>
</dbReference>
<dbReference type="GO" id="GO:0005829">
    <property type="term" value="C:cytosol"/>
    <property type="evidence" value="ECO:0007669"/>
    <property type="project" value="GOC"/>
</dbReference>
<dbReference type="GO" id="GO:0005769">
    <property type="term" value="C:early endosome"/>
    <property type="evidence" value="ECO:0007669"/>
    <property type="project" value="UniProtKB-SubCell"/>
</dbReference>
<dbReference type="GO" id="GO:0010008">
    <property type="term" value="C:endosome membrane"/>
    <property type="evidence" value="ECO:0007669"/>
    <property type="project" value="UniProtKB-SubCell"/>
</dbReference>
<dbReference type="GO" id="GO:0005770">
    <property type="term" value="C:late endosome"/>
    <property type="evidence" value="ECO:0007669"/>
    <property type="project" value="UniProtKB-SubCell"/>
</dbReference>
<dbReference type="GO" id="GO:0030904">
    <property type="term" value="C:retromer complex"/>
    <property type="evidence" value="ECO:0000250"/>
    <property type="project" value="UniProtKB"/>
</dbReference>
<dbReference type="GO" id="GO:0046872">
    <property type="term" value="F:metal ion binding"/>
    <property type="evidence" value="ECO:0007669"/>
    <property type="project" value="UniProtKB-KW"/>
</dbReference>
<dbReference type="GO" id="GO:0032456">
    <property type="term" value="P:endocytic recycling"/>
    <property type="evidence" value="ECO:0000250"/>
    <property type="project" value="UniProtKB"/>
</dbReference>
<dbReference type="GO" id="GO:0015031">
    <property type="term" value="P:protein transport"/>
    <property type="evidence" value="ECO:0007669"/>
    <property type="project" value="UniProtKB-KW"/>
</dbReference>
<dbReference type="GO" id="GO:0042147">
    <property type="term" value="P:retrograde transport, endosome to Golgi"/>
    <property type="evidence" value="ECO:0007669"/>
    <property type="project" value="InterPro"/>
</dbReference>
<dbReference type="CDD" id="cd07394">
    <property type="entry name" value="MPP_Vps29"/>
    <property type="match status" value="1"/>
</dbReference>
<dbReference type="FunFam" id="3.60.21.10:FF:000009">
    <property type="entry name" value="Vacuolar protein sorting-associated protein 29"/>
    <property type="match status" value="1"/>
</dbReference>
<dbReference type="Gene3D" id="3.60.21.10">
    <property type="match status" value="1"/>
</dbReference>
<dbReference type="InterPro" id="IPR024654">
    <property type="entry name" value="Calcineurin-like_PHP_lpxH"/>
</dbReference>
<dbReference type="InterPro" id="IPR029052">
    <property type="entry name" value="Metallo-depent_PP-like"/>
</dbReference>
<dbReference type="InterPro" id="IPR000979">
    <property type="entry name" value="Phosphodiesterase_MJ0936/Vps29"/>
</dbReference>
<dbReference type="InterPro" id="IPR028661">
    <property type="entry name" value="Vps29"/>
</dbReference>
<dbReference type="NCBIfam" id="TIGR00040">
    <property type="entry name" value="yfcE"/>
    <property type="match status" value="1"/>
</dbReference>
<dbReference type="PANTHER" id="PTHR11124">
    <property type="entry name" value="VACUOLAR SORTING PROTEIN VPS29"/>
    <property type="match status" value="1"/>
</dbReference>
<dbReference type="Pfam" id="PF12850">
    <property type="entry name" value="Metallophos_2"/>
    <property type="match status" value="1"/>
</dbReference>
<dbReference type="SUPFAM" id="SSF56300">
    <property type="entry name" value="Metallo-dependent phosphatases"/>
    <property type="match status" value="1"/>
</dbReference>